<evidence type="ECO:0000255" key="1"/>
<evidence type="ECO:0000255" key="2">
    <source>
        <dbReference type="PROSITE-ProRule" id="PRU00434"/>
    </source>
</evidence>
<evidence type="ECO:0000255" key="3">
    <source>
        <dbReference type="PROSITE-ProRule" id="PRU00441"/>
    </source>
</evidence>
<evidence type="ECO:0000256" key="4">
    <source>
        <dbReference type="SAM" id="MobiDB-lite"/>
    </source>
</evidence>
<evidence type="ECO:0000305" key="5"/>
<dbReference type="EMBL" id="AY230264">
    <property type="protein sequence ID" value="AAO73540.1"/>
    <property type="molecule type" value="Genomic_DNA"/>
</dbReference>
<dbReference type="EMBL" id="AY230265">
    <property type="protein sequence ID" value="AAO73541.1"/>
    <property type="molecule type" value="Genomic_DNA"/>
</dbReference>
<dbReference type="EMBL" id="AY230266">
    <property type="protein sequence ID" value="AAO73542.1"/>
    <property type="molecule type" value="Genomic_DNA"/>
</dbReference>
<dbReference type="SMR" id="P0CE70"/>
<dbReference type="IntAct" id="P0CE70">
    <property type="interactions" value="3"/>
</dbReference>
<dbReference type="MINT" id="P0CE70"/>
<dbReference type="GlyCosmos" id="P0CE70">
    <property type="glycosylation" value="1 site, No reported glycans"/>
</dbReference>
<dbReference type="VEuPathDB" id="FungiDB:YKR103W"/>
<dbReference type="VEuPathDB" id="FungiDB:YKR104W"/>
<dbReference type="GO" id="GO:0000329">
    <property type="term" value="C:fungal-type vacuole membrane"/>
    <property type="evidence" value="ECO:0007669"/>
    <property type="project" value="TreeGrafter"/>
</dbReference>
<dbReference type="GO" id="GO:0140359">
    <property type="term" value="F:ABC-type transporter activity"/>
    <property type="evidence" value="ECO:0007669"/>
    <property type="project" value="InterPro"/>
</dbReference>
<dbReference type="GO" id="GO:0005524">
    <property type="term" value="F:ATP binding"/>
    <property type="evidence" value="ECO:0007669"/>
    <property type="project" value="UniProtKB-KW"/>
</dbReference>
<dbReference type="GO" id="GO:0016887">
    <property type="term" value="F:ATP hydrolysis activity"/>
    <property type="evidence" value="ECO:0007669"/>
    <property type="project" value="InterPro"/>
</dbReference>
<dbReference type="CDD" id="cd18596">
    <property type="entry name" value="ABC_6TM_VMR1_D1_like"/>
    <property type="match status" value="1"/>
</dbReference>
<dbReference type="CDD" id="cd18604">
    <property type="entry name" value="ABC_6TM_VMR1_D2_like"/>
    <property type="match status" value="1"/>
</dbReference>
<dbReference type="CDD" id="cd03369">
    <property type="entry name" value="ABCC_NFT1"/>
    <property type="match status" value="1"/>
</dbReference>
<dbReference type="FunFam" id="1.20.1560.10:FF:000013">
    <property type="entry name" value="ABC transporter C family member 2"/>
    <property type="match status" value="1"/>
</dbReference>
<dbReference type="FunFam" id="3.40.50.300:FF:003545">
    <property type="entry name" value="Predicted protein"/>
    <property type="match status" value="1"/>
</dbReference>
<dbReference type="Gene3D" id="1.20.1560.10">
    <property type="entry name" value="ABC transporter type 1, transmembrane domain"/>
    <property type="match status" value="2"/>
</dbReference>
<dbReference type="Gene3D" id="3.40.50.300">
    <property type="entry name" value="P-loop containing nucleotide triphosphate hydrolases"/>
    <property type="match status" value="2"/>
</dbReference>
<dbReference type="InterPro" id="IPR003593">
    <property type="entry name" value="AAA+_ATPase"/>
</dbReference>
<dbReference type="InterPro" id="IPR011527">
    <property type="entry name" value="ABC1_TM_dom"/>
</dbReference>
<dbReference type="InterPro" id="IPR036640">
    <property type="entry name" value="ABC1_TM_sf"/>
</dbReference>
<dbReference type="InterPro" id="IPR003439">
    <property type="entry name" value="ABC_transporter-like_ATP-bd"/>
</dbReference>
<dbReference type="InterPro" id="IPR017871">
    <property type="entry name" value="ABC_transporter-like_CS"/>
</dbReference>
<dbReference type="InterPro" id="IPR050173">
    <property type="entry name" value="ABC_transporter_C-like"/>
</dbReference>
<dbReference type="InterPro" id="IPR027417">
    <property type="entry name" value="P-loop_NTPase"/>
</dbReference>
<dbReference type="PANTHER" id="PTHR24223:SF353">
    <property type="entry name" value="ABC TRANSPORTER ATP-BINDING PROTEIN_PERMEASE VMR1-RELATED"/>
    <property type="match status" value="1"/>
</dbReference>
<dbReference type="PANTHER" id="PTHR24223">
    <property type="entry name" value="ATP-BINDING CASSETTE SUB-FAMILY C"/>
    <property type="match status" value="1"/>
</dbReference>
<dbReference type="Pfam" id="PF00664">
    <property type="entry name" value="ABC_membrane"/>
    <property type="match status" value="2"/>
</dbReference>
<dbReference type="Pfam" id="PF00005">
    <property type="entry name" value="ABC_tran"/>
    <property type="match status" value="2"/>
</dbReference>
<dbReference type="SMART" id="SM00382">
    <property type="entry name" value="AAA"/>
    <property type="match status" value="2"/>
</dbReference>
<dbReference type="SUPFAM" id="SSF90123">
    <property type="entry name" value="ABC transporter transmembrane region"/>
    <property type="match status" value="2"/>
</dbReference>
<dbReference type="SUPFAM" id="SSF52540">
    <property type="entry name" value="P-loop containing nucleoside triphosphate hydrolases"/>
    <property type="match status" value="2"/>
</dbReference>
<dbReference type="PROSITE" id="PS50929">
    <property type="entry name" value="ABC_TM1F"/>
    <property type="match status" value="2"/>
</dbReference>
<dbReference type="PROSITE" id="PS00211">
    <property type="entry name" value="ABC_TRANSPORTER_1"/>
    <property type="match status" value="2"/>
</dbReference>
<dbReference type="PROSITE" id="PS50893">
    <property type="entry name" value="ABC_TRANSPORTER_2"/>
    <property type="match status" value="2"/>
</dbReference>
<reference key="1">
    <citation type="journal article" date="2003" name="Eukaryot. Cell">
        <title>A region within a lumenal loop of Saccharomyces cerevisiae Ycf1p directs proteolytic processing and substrate specificity.</title>
        <authorList>
            <person name="Mason D.L."/>
            <person name="Mallampalli M.P."/>
            <person name="Huyer G."/>
            <person name="Michaelis S."/>
        </authorList>
    </citation>
    <scope>NUCLEOTIDE SEQUENCE [GENOMIC DNA]</scope>
    <source>
        <strain>ATCC 204278 / EG123 / SM1058</strain>
        <strain>Sigma 1278B</strain>
        <strain>SK1</strain>
    </source>
</reference>
<protein>
    <recommendedName>
        <fullName>ABC transporter NFT1</fullName>
    </recommendedName>
    <alternativeName>
        <fullName>New full-length MRP-type transporter 1</fullName>
    </alternativeName>
</protein>
<sequence>MIKNGTCPYWERDDLSECARREYIEFKFPLFILLTGMIYAFCKVFRAFYLRGKNHTNEAPEFEEQGNGNHEYARFSVLRLKSAWESRSFCNVNNRSTFDKFKKFIEGAFIVLQLTIHLYILSSMPMDNKKFFHQGFLVQMFLWILLLVVITLRLISASQSFRWVLACKRDLWAVSFYSYASLFTLSILPLRSVFIGKIKDKIMVKYIISETFIDLALLLLLSTSSIEGTRYSFLVENENKKLPPAPTVFGLLTFSRIDRLIWKAYKHCLGNADIWDLDINNKSIAILANFEMSSKKGRLLPNIICYFKAVFISQLFLAFVSSFLNFVPSLLMPRILSYVNDPKSKSWNLVSLYVSSMLVSKIIATTCRGQGLFLGEKGTMQLRTVLISNIYSKTLRRTILKDSTTSLQKNASTSFEENPDSSEAEPRKKSSRKDNSVNNVMSIDAFKVSEAMNTFYLACEAVFMTVTALMILYSLLGWSAFAGTFALLAMIPLNFWCATFYGNYQADQLILTDKRTSGISEALNSIRVIKLLAWENLFYQKIINVRDGEIRLLKKKATIFFLNHLIWFFGPTLVSAITFSVFIKFQNQTLTPTIAFTALSLFAILRTPMDQIASTVSLLIQSFISLERIQDYLNESETRKYEILEQSNTKFGFEDASMEWEAAETSFKLKNISIDFKLNSLNAIIGPTGSGKSSLLLGLLGELNLLSGKIYVPTVESRDDLEIGKDGMTNSMAYCSQTPWLISGTIKDNVVFGEIFNKQKFDDVMKSCCLDKDIKAMTAGIRTDVGDGGFSLSGGQQQRIALARAIYSSSRYLILDDCLSAVDPETALYIYEECLCGPMMKGRTCIITSHNISLVTKRADWLVILDRGEVKSQGKPSDLIKSNEFLRESINNDSKNTTHNQIDLKRSTTSKKTKNGDPEGGNSQDEVCAEVENFEETKMEGSVKFSAYKWLADYFGGLGVVFVFTSSSILIHGITLSQGFWLRYWLDTGSSGSKSTWLYRIVEGHSNIYFLLTYIIIGLVSSFLTSGKVWIAIISGTNVTKKIFAKLLSSILYAKLRFHNVTPTGRIMNRFSKDMDIIDQQLIPNFEGLSYSVVVCLWIILLIGYVTPQFLLFAIPLCALYYTVCTLYLRASRELKRIDNINISPIHQLFAEAIKGVTTIRALADERRFITQSLVAIDRSNAPFFYLNMATEWITYRVDIIGTLVLFSSSVMIIMKASYLDAGLAGILLSNAFSFTETAQWIIKVFSSVELLMSSVERIKEYTDIPSESNGYISPPANWPQTGDVELKNLSLRYSPHSSKALDNVSFKVKAGTKVGIVGRTGAGKSSIIAAIYRLSDWENGTITIDNKDIKHIPLERLRNSISCIPQDPTLFDGTVRSNLDPFDRYSDVQIYGVLSKVGLIEECDELCLIFEQEQPNFSSHKLRNRFIDLNTVVKSGGSNLSQGQRQLLCLARSMLGARNIMLIDEATASIDYISDAKIQKTIRETMKNTTILTIAHRLRSVIDYDKILVMEMGRVKEYDHPYTLISDRNTIFYRLCRQSGEFENLFELAKVSFDNKR</sequence>
<name>NFT1_YEASX</name>
<organism>
    <name type="scientific">Saccharomyces cerevisiae</name>
    <name type="common">Baker's yeast</name>
    <dbReference type="NCBI Taxonomy" id="4932"/>
    <lineage>
        <taxon>Eukaryota</taxon>
        <taxon>Fungi</taxon>
        <taxon>Dikarya</taxon>
        <taxon>Ascomycota</taxon>
        <taxon>Saccharomycotina</taxon>
        <taxon>Saccharomycetes</taxon>
        <taxon>Saccharomycetales</taxon>
        <taxon>Saccharomycetaceae</taxon>
        <taxon>Saccharomyces</taxon>
    </lineage>
</organism>
<proteinExistence type="inferred from homology"/>
<accession>P0CE70</accession>
<accession>P36028</accession>
<accession>P36171</accession>
<accession>Q53ZY4</accession>
<accession>Q6Q5L3</accession>
<feature type="chain" id="PRO_0000392614" description="ABC transporter NFT1">
    <location>
        <begin position="1"/>
        <end position="1558"/>
    </location>
</feature>
<feature type="topological domain" description="Extracellular" evidence="1">
    <location>
        <begin position="1"/>
        <end position="29"/>
    </location>
</feature>
<feature type="transmembrane region" description="Helical" evidence="3">
    <location>
        <begin position="30"/>
        <end position="50"/>
    </location>
</feature>
<feature type="topological domain" description="Cytoplasmic" evidence="1">
    <location>
        <begin position="51"/>
        <end position="103"/>
    </location>
</feature>
<feature type="transmembrane region" description="Helical" evidence="3">
    <location>
        <begin position="104"/>
        <end position="124"/>
    </location>
</feature>
<feature type="topological domain" description="Extracellular" evidence="1">
    <location>
        <begin position="125"/>
        <end position="130"/>
    </location>
</feature>
<feature type="transmembrane region" description="Helical" evidence="3">
    <location>
        <begin position="131"/>
        <end position="151"/>
    </location>
</feature>
<feature type="topological domain" description="Cytoplasmic" evidence="1">
    <location>
        <begin position="152"/>
        <end position="169"/>
    </location>
</feature>
<feature type="transmembrane region" description="Helical" evidence="3">
    <location>
        <begin position="170"/>
        <end position="190"/>
    </location>
</feature>
<feature type="topological domain" description="Extracellular" evidence="1">
    <location>
        <begin position="191"/>
        <end position="201"/>
    </location>
</feature>
<feature type="transmembrane region" description="Helical" evidence="3">
    <location>
        <begin position="202"/>
        <end position="222"/>
    </location>
</feature>
<feature type="topological domain" description="Cytoplasmic" evidence="1">
    <location>
        <begin position="223"/>
        <end position="302"/>
    </location>
</feature>
<feature type="transmembrane region" description="Helical" evidence="3">
    <location>
        <begin position="303"/>
        <end position="323"/>
    </location>
</feature>
<feature type="topological domain" description="Extracellular" evidence="1">
    <location>
        <begin position="324"/>
        <end position="351"/>
    </location>
</feature>
<feature type="transmembrane region" description="Helical" evidence="3">
    <location>
        <begin position="352"/>
        <end position="374"/>
    </location>
</feature>
<feature type="topological domain" description="Cytoplasmic" evidence="1">
    <location>
        <begin position="375"/>
        <end position="449"/>
    </location>
</feature>
<feature type="transmembrane region" description="Helical" evidence="3">
    <location>
        <begin position="450"/>
        <end position="470"/>
    </location>
</feature>
<feature type="topological domain" description="Extracellular" evidence="1">
    <location>
        <begin position="471"/>
        <end position="481"/>
    </location>
</feature>
<feature type="transmembrane region" description="Helical" evidence="3">
    <location>
        <begin position="482"/>
        <end position="504"/>
    </location>
</feature>
<feature type="topological domain" description="Cytoplasmic" evidence="1">
    <location>
        <begin position="505"/>
        <end position="558"/>
    </location>
</feature>
<feature type="transmembrane region" description="Helical" evidence="3">
    <location>
        <begin position="559"/>
        <end position="579"/>
    </location>
</feature>
<feature type="topological domain" description="Extracellular" evidence="1">
    <location>
        <begin position="580"/>
        <end position="584"/>
    </location>
</feature>
<feature type="transmembrane region" description="Helical" evidence="3">
    <location>
        <begin position="585"/>
        <end position="605"/>
    </location>
</feature>
<feature type="topological domain" description="Cytoplasmic" evidence="1">
    <location>
        <begin position="606"/>
        <end position="953"/>
    </location>
</feature>
<feature type="transmembrane region" description="Helical" evidence="3">
    <location>
        <begin position="954"/>
        <end position="974"/>
    </location>
</feature>
<feature type="topological domain" description="Extracellular" evidence="1">
    <location>
        <begin position="975"/>
        <end position="1013"/>
    </location>
</feature>
<feature type="transmembrane region" description="Helical" evidence="3">
    <location>
        <begin position="1014"/>
        <end position="1034"/>
    </location>
</feature>
<feature type="topological domain" description="Cytoplasmic" evidence="1">
    <location>
        <begin position="1035"/>
        <end position="1082"/>
    </location>
</feature>
<feature type="transmembrane region" description="Helical" evidence="3">
    <location>
        <begin position="1083"/>
        <end position="1105"/>
    </location>
</feature>
<feature type="topological domain" description="Extracellular" evidence="1">
    <location>
        <begin position="1106"/>
        <end position="1109"/>
    </location>
</feature>
<feature type="transmembrane region" description="Helical" evidence="3">
    <location>
        <begin position="1110"/>
        <end position="1132"/>
    </location>
</feature>
<feature type="topological domain" description="Cytoplasmic" evidence="1">
    <location>
        <begin position="1133"/>
        <end position="1199"/>
    </location>
</feature>
<feature type="transmembrane region" description="Helical" evidence="3">
    <location>
        <begin position="1200"/>
        <end position="1220"/>
    </location>
</feature>
<feature type="topological domain" description="Extracellular" evidence="1">
    <location>
        <begin position="1221"/>
        <end position="1222"/>
    </location>
</feature>
<feature type="transmembrane region" description="Helical" evidence="3">
    <location>
        <begin position="1223"/>
        <end position="1243"/>
    </location>
</feature>
<feature type="topological domain" description="Cytoplasmic" evidence="1">
    <location>
        <begin position="1244"/>
        <end position="1558"/>
    </location>
</feature>
<feature type="domain" description="ABC transmembrane type-1 1" evidence="3">
    <location>
        <begin position="311"/>
        <end position="621"/>
    </location>
</feature>
<feature type="domain" description="ABC transporter 1" evidence="2">
    <location>
        <begin position="651"/>
        <end position="892"/>
    </location>
</feature>
<feature type="domain" description="ABC transmembrane type-1 2" evidence="3">
    <location>
        <begin position="961"/>
        <end position="1251"/>
    </location>
</feature>
<feature type="domain" description="ABC transporter 2" evidence="2">
    <location>
        <begin position="1285"/>
        <end position="1538"/>
    </location>
</feature>
<feature type="region of interest" description="Disordered" evidence="4">
    <location>
        <begin position="410"/>
        <end position="434"/>
    </location>
</feature>
<feature type="region of interest" description="Disordered" evidence="4">
    <location>
        <begin position="892"/>
        <end position="926"/>
    </location>
</feature>
<feature type="compositionally biased region" description="Basic and acidic residues" evidence="4">
    <location>
        <begin position="424"/>
        <end position="434"/>
    </location>
</feature>
<feature type="compositionally biased region" description="Polar residues" evidence="4">
    <location>
        <begin position="892"/>
        <end position="901"/>
    </location>
</feature>
<feature type="binding site" evidence="2">
    <location>
        <begin position="686"/>
        <end position="693"/>
    </location>
    <ligand>
        <name>ATP</name>
        <dbReference type="ChEBI" id="CHEBI:30616"/>
    </ligand>
</feature>
<feature type="binding site" evidence="2">
    <location>
        <begin position="1319"/>
        <end position="1326"/>
    </location>
    <ligand>
        <name>ATP</name>
        <dbReference type="ChEBI" id="CHEBI:30616"/>
    </ligand>
</feature>
<feature type="glycosylation site" description="N-linked (GlcNAc...) asparagine" evidence="1">
    <location>
        <position position="4"/>
    </location>
</feature>
<keyword id="KW-0067">ATP-binding</keyword>
<keyword id="KW-0325">Glycoprotein</keyword>
<keyword id="KW-0472">Membrane</keyword>
<keyword id="KW-0547">Nucleotide-binding</keyword>
<keyword id="KW-0677">Repeat</keyword>
<keyword id="KW-0812">Transmembrane</keyword>
<keyword id="KW-1133">Transmembrane helix</keyword>
<keyword id="KW-0813">Transport</keyword>
<gene>
    <name type="primary">NFT1</name>
</gene>
<comment type="subcellular location">
    <subcellularLocation>
        <location>Membrane</location>
        <topology>Multi-pass membrane protein</topology>
    </subcellularLocation>
</comment>
<comment type="similarity">
    <text evidence="5">Belongs to the ABC transporter superfamily. ABCC family. Conjugate transporter (TC 3.A.1.208) subfamily.</text>
</comment>